<gene>
    <name type="primary">MT-CO2</name>
    <name type="synonym">COII</name>
    <name type="synonym">COXII</name>
    <name type="synonym">MTCO2</name>
</gene>
<accession>Q37604</accession>
<name>COX2_PETMA</name>
<evidence type="ECO:0000250" key="1">
    <source>
        <dbReference type="UniProtKB" id="P00403"/>
    </source>
</evidence>
<evidence type="ECO:0000250" key="2">
    <source>
        <dbReference type="UniProtKB" id="P00410"/>
    </source>
</evidence>
<evidence type="ECO:0000250" key="3">
    <source>
        <dbReference type="UniProtKB" id="P68530"/>
    </source>
</evidence>
<evidence type="ECO:0000305" key="4"/>
<dbReference type="EC" id="7.1.1.9"/>
<dbReference type="EMBL" id="U11880">
    <property type="protein sequence ID" value="AAB08741.1"/>
    <property type="molecule type" value="Genomic_DNA"/>
</dbReference>
<dbReference type="PIR" id="S55007">
    <property type="entry name" value="S55007"/>
</dbReference>
<dbReference type="SMR" id="Q37604"/>
<dbReference type="STRING" id="7757.ENSPMAP00000011434"/>
<dbReference type="Ensembl" id="ENSPMAT00000014125.1">
    <property type="protein sequence ID" value="ENSPMAP00000011434.1"/>
    <property type="gene ID" value="ENSPMAG00000013098.1"/>
</dbReference>
<dbReference type="KEGG" id="pmrn:807803"/>
<dbReference type="CTD" id="4513"/>
<dbReference type="GeneTree" id="ENSGT00390000017410"/>
<dbReference type="HOGENOM" id="CLU_036876_2_3_1"/>
<dbReference type="OMA" id="WSYEYTD"/>
<dbReference type="OrthoDB" id="539285at2759"/>
<dbReference type="Proteomes" id="UP001318040">
    <property type="component" value="Mitochondrion MT"/>
</dbReference>
<dbReference type="GO" id="GO:0005743">
    <property type="term" value="C:mitochondrial inner membrane"/>
    <property type="evidence" value="ECO:0007669"/>
    <property type="project" value="UniProtKB-SubCell"/>
</dbReference>
<dbReference type="GO" id="GO:0045277">
    <property type="term" value="C:respiratory chain complex IV"/>
    <property type="evidence" value="ECO:0000250"/>
    <property type="project" value="UniProtKB"/>
</dbReference>
<dbReference type="GO" id="GO:0005507">
    <property type="term" value="F:copper ion binding"/>
    <property type="evidence" value="ECO:0007669"/>
    <property type="project" value="InterPro"/>
</dbReference>
<dbReference type="GO" id="GO:0004129">
    <property type="term" value="F:cytochrome-c oxidase activity"/>
    <property type="evidence" value="ECO:0007669"/>
    <property type="project" value="UniProtKB-EC"/>
</dbReference>
<dbReference type="GO" id="GO:0042773">
    <property type="term" value="P:ATP synthesis coupled electron transport"/>
    <property type="evidence" value="ECO:0007669"/>
    <property type="project" value="TreeGrafter"/>
</dbReference>
<dbReference type="CDD" id="cd13912">
    <property type="entry name" value="CcO_II_C"/>
    <property type="match status" value="1"/>
</dbReference>
<dbReference type="FunFam" id="1.10.287.90:FF:000001">
    <property type="entry name" value="Cytochrome c oxidase subunit 2"/>
    <property type="match status" value="1"/>
</dbReference>
<dbReference type="FunFam" id="2.60.40.420:FF:000001">
    <property type="entry name" value="Cytochrome c oxidase subunit 2"/>
    <property type="match status" value="1"/>
</dbReference>
<dbReference type="Gene3D" id="1.10.287.90">
    <property type="match status" value="1"/>
</dbReference>
<dbReference type="Gene3D" id="2.60.40.420">
    <property type="entry name" value="Cupredoxins - blue copper proteins"/>
    <property type="match status" value="1"/>
</dbReference>
<dbReference type="InterPro" id="IPR045187">
    <property type="entry name" value="CcO_II"/>
</dbReference>
<dbReference type="InterPro" id="IPR002429">
    <property type="entry name" value="CcO_II-like_C"/>
</dbReference>
<dbReference type="InterPro" id="IPR034210">
    <property type="entry name" value="CcO_II_C"/>
</dbReference>
<dbReference type="InterPro" id="IPR001505">
    <property type="entry name" value="Copper_CuA"/>
</dbReference>
<dbReference type="InterPro" id="IPR008972">
    <property type="entry name" value="Cupredoxin"/>
</dbReference>
<dbReference type="InterPro" id="IPR014222">
    <property type="entry name" value="Cyt_c_oxidase_su2"/>
</dbReference>
<dbReference type="InterPro" id="IPR011759">
    <property type="entry name" value="Cyt_c_oxidase_su2_TM_dom"/>
</dbReference>
<dbReference type="InterPro" id="IPR036257">
    <property type="entry name" value="Cyt_c_oxidase_su2_TM_sf"/>
</dbReference>
<dbReference type="NCBIfam" id="TIGR02866">
    <property type="entry name" value="CoxB"/>
    <property type="match status" value="1"/>
</dbReference>
<dbReference type="PANTHER" id="PTHR22888:SF9">
    <property type="entry name" value="CYTOCHROME C OXIDASE SUBUNIT 2"/>
    <property type="match status" value="1"/>
</dbReference>
<dbReference type="PANTHER" id="PTHR22888">
    <property type="entry name" value="CYTOCHROME C OXIDASE, SUBUNIT II"/>
    <property type="match status" value="1"/>
</dbReference>
<dbReference type="Pfam" id="PF00116">
    <property type="entry name" value="COX2"/>
    <property type="match status" value="1"/>
</dbReference>
<dbReference type="Pfam" id="PF02790">
    <property type="entry name" value="COX2_TM"/>
    <property type="match status" value="1"/>
</dbReference>
<dbReference type="PRINTS" id="PR01166">
    <property type="entry name" value="CYCOXIDASEII"/>
</dbReference>
<dbReference type="SUPFAM" id="SSF49503">
    <property type="entry name" value="Cupredoxins"/>
    <property type="match status" value="1"/>
</dbReference>
<dbReference type="SUPFAM" id="SSF81464">
    <property type="entry name" value="Cytochrome c oxidase subunit II-like, transmembrane region"/>
    <property type="match status" value="1"/>
</dbReference>
<dbReference type="PROSITE" id="PS00078">
    <property type="entry name" value="COX2"/>
    <property type="match status" value="1"/>
</dbReference>
<dbReference type="PROSITE" id="PS50857">
    <property type="entry name" value="COX2_CUA"/>
    <property type="match status" value="1"/>
</dbReference>
<dbReference type="PROSITE" id="PS50999">
    <property type="entry name" value="COX2_TM"/>
    <property type="match status" value="1"/>
</dbReference>
<keyword id="KW-0186">Copper</keyword>
<keyword id="KW-0249">Electron transport</keyword>
<keyword id="KW-0460">Magnesium</keyword>
<keyword id="KW-0472">Membrane</keyword>
<keyword id="KW-0479">Metal-binding</keyword>
<keyword id="KW-0496">Mitochondrion</keyword>
<keyword id="KW-0999">Mitochondrion inner membrane</keyword>
<keyword id="KW-0679">Respiratory chain</keyword>
<keyword id="KW-1278">Translocase</keyword>
<keyword id="KW-0812">Transmembrane</keyword>
<keyword id="KW-1133">Transmembrane helix</keyword>
<keyword id="KW-0813">Transport</keyword>
<organism>
    <name type="scientific">Petromyzon marinus</name>
    <name type="common">Sea lamprey</name>
    <dbReference type="NCBI Taxonomy" id="7757"/>
    <lineage>
        <taxon>Eukaryota</taxon>
        <taxon>Metazoa</taxon>
        <taxon>Chordata</taxon>
        <taxon>Craniata</taxon>
        <taxon>Vertebrata</taxon>
        <taxon>Cyclostomata</taxon>
        <taxon>Hyperoartia</taxon>
        <taxon>Petromyzontiformes</taxon>
        <taxon>Petromyzontidae</taxon>
        <taxon>Petromyzon</taxon>
    </lineage>
</organism>
<reference key="1">
    <citation type="journal article" date="1995" name="Genetics">
        <title>Complete sequence of a sea lamprey (Petromyzon marinus) mitochondrial genome: early establishment of the vertebrate genome organization.</title>
        <authorList>
            <person name="Lee W.J."/>
            <person name="Kocher T.D."/>
        </authorList>
    </citation>
    <scope>NUCLEOTIDE SEQUENCE [GENOMIC DNA]</scope>
</reference>
<comment type="function">
    <text evidence="2">Component of the cytochrome c oxidase, the last enzyme in the mitochondrial electron transport chain which drives oxidative phosphorylation. The respiratory chain contains 3 multisubunit complexes succinate dehydrogenase (complex II, CII), ubiquinol-cytochrome c oxidoreductase (cytochrome b-c1 complex, complex III, CIII) and cytochrome c oxidase (complex IV, CIV), that cooperate to transfer electrons derived from NADH and succinate to molecular oxygen, creating an electrochemical gradient over the inner membrane that drives transmembrane transport and the ATP synthase. Cytochrome c oxidase is the component of the respiratory chain that catalyzes the reduction of oxygen to water. Electrons originating from reduced cytochrome c in the intermembrane space (IMS) are transferred via the dinuclear copper A center (CU(A)) of subunit 2 and heme A of subunit 1 to the active site in subunit 1, a binuclear center (BNC) formed by heme A3 and copper B (CU(B)). The BNC reduces molecular oxygen to 2 water molecules using 4 electrons from cytochrome c in the IMS and 4 protons from the mitochondrial matrix.</text>
</comment>
<comment type="catalytic activity">
    <reaction evidence="2">
        <text>4 Fe(II)-[cytochrome c] + O2 + 8 H(+)(in) = 4 Fe(III)-[cytochrome c] + 2 H2O + 4 H(+)(out)</text>
        <dbReference type="Rhea" id="RHEA:11436"/>
        <dbReference type="Rhea" id="RHEA-COMP:10350"/>
        <dbReference type="Rhea" id="RHEA-COMP:14399"/>
        <dbReference type="ChEBI" id="CHEBI:15377"/>
        <dbReference type="ChEBI" id="CHEBI:15378"/>
        <dbReference type="ChEBI" id="CHEBI:15379"/>
        <dbReference type="ChEBI" id="CHEBI:29033"/>
        <dbReference type="ChEBI" id="CHEBI:29034"/>
        <dbReference type="EC" id="7.1.1.9"/>
    </reaction>
    <physiologicalReaction direction="left-to-right" evidence="2">
        <dbReference type="Rhea" id="RHEA:11437"/>
    </physiologicalReaction>
</comment>
<comment type="cofactor">
    <cofactor evidence="3">
        <name>Cu cation</name>
        <dbReference type="ChEBI" id="CHEBI:23378"/>
    </cofactor>
    <text evidence="3">Binds a dinuclear copper A center per subunit.</text>
</comment>
<comment type="subunit">
    <text evidence="1 3">Component of the cytochrome c oxidase (complex IV, CIV), a multisubunit enzyme composed of 14 subunits. The complex is composed of a catalytic core of 3 subunits MT-CO1, MT-CO2 and MT-CO3, encoded in the mitochondrial DNA, and 11 supernumerary subunits COX4I, COX5A, COX5B, COX6A, COX6B, COX6C, COX7A, COX7B, COX7C, COX8 and NDUFA4, which are encoded in the nuclear genome. The complex exists as a monomer or a dimer and forms supercomplexes (SCs) in the inner mitochondrial membrane with NADH-ubiquinone oxidoreductase (complex I, CI) and ubiquinol-cytochrome c oxidoreductase (cytochrome b-c1 complex, complex III, CIII), resulting in different assemblies (supercomplex SCI(1)III(2)IV(1) and megacomplex MCI(2)III(2)IV(2)) (By similarity). Found in a complex with TMEM177, COA6, COX18, COX20, SCO1 and SCO2. Interacts with TMEM177 in a COX20-dependent manner. Interacts with COX20. Interacts with COX16 (By similarity).</text>
</comment>
<comment type="subcellular location">
    <subcellularLocation>
        <location evidence="3">Mitochondrion inner membrane</location>
        <topology evidence="3">Multi-pass membrane protein</topology>
    </subcellularLocation>
</comment>
<comment type="similarity">
    <text evidence="4">Belongs to the cytochrome c oxidase subunit 2 family.</text>
</comment>
<protein>
    <recommendedName>
        <fullName>Cytochrome c oxidase subunit 2</fullName>
        <ecNumber>7.1.1.9</ecNumber>
    </recommendedName>
    <alternativeName>
        <fullName>Cytochrome c oxidase polypeptide II</fullName>
    </alternativeName>
</protein>
<feature type="chain" id="PRO_0000183658" description="Cytochrome c oxidase subunit 2">
    <location>
        <begin position="1"/>
        <end position="229"/>
    </location>
</feature>
<feature type="topological domain" description="Mitochondrial intermembrane" evidence="3">
    <location>
        <begin position="1"/>
        <end position="14"/>
    </location>
</feature>
<feature type="transmembrane region" description="Helical; Name=I" evidence="3">
    <location>
        <begin position="15"/>
        <end position="45"/>
    </location>
</feature>
<feature type="topological domain" description="Mitochondrial matrix" evidence="3">
    <location>
        <begin position="46"/>
        <end position="59"/>
    </location>
</feature>
<feature type="transmembrane region" description="Helical; Name=II" evidence="3">
    <location>
        <begin position="60"/>
        <end position="87"/>
    </location>
</feature>
<feature type="topological domain" description="Mitochondrial intermembrane" evidence="3">
    <location>
        <begin position="88"/>
        <end position="229"/>
    </location>
</feature>
<feature type="binding site" evidence="3">
    <location>
        <position position="161"/>
    </location>
    <ligand>
        <name>Cu cation</name>
        <dbReference type="ChEBI" id="CHEBI:23378"/>
        <label>A1</label>
    </ligand>
</feature>
<feature type="binding site" evidence="3">
    <location>
        <position position="196"/>
    </location>
    <ligand>
        <name>Cu cation</name>
        <dbReference type="ChEBI" id="CHEBI:23378"/>
        <label>A1</label>
    </ligand>
</feature>
<feature type="binding site" evidence="3">
    <location>
        <position position="196"/>
    </location>
    <ligand>
        <name>Cu cation</name>
        <dbReference type="ChEBI" id="CHEBI:23378"/>
        <label>A2</label>
    </ligand>
</feature>
<feature type="binding site" evidence="3">
    <location>
        <position position="198"/>
    </location>
    <ligand>
        <name>Cu cation</name>
        <dbReference type="ChEBI" id="CHEBI:23378"/>
        <label>A2</label>
    </ligand>
</feature>
<feature type="binding site" evidence="3">
    <location>
        <position position="198"/>
    </location>
    <ligand>
        <name>Mg(2+)</name>
        <dbReference type="ChEBI" id="CHEBI:18420"/>
        <note>ligand shared with MT-CO1</note>
    </ligand>
</feature>
<feature type="binding site" evidence="3">
    <location>
        <position position="200"/>
    </location>
    <ligand>
        <name>Cu cation</name>
        <dbReference type="ChEBI" id="CHEBI:23378"/>
        <label>A1</label>
    </ligand>
</feature>
<feature type="binding site" evidence="3">
    <location>
        <position position="200"/>
    </location>
    <ligand>
        <name>Cu cation</name>
        <dbReference type="ChEBI" id="CHEBI:23378"/>
        <label>A2</label>
    </ligand>
</feature>
<feature type="binding site" evidence="3">
    <location>
        <position position="204"/>
    </location>
    <ligand>
        <name>Cu cation</name>
        <dbReference type="ChEBI" id="CHEBI:23378"/>
        <label>A2</label>
    </ligand>
</feature>
<feature type="binding site" evidence="3">
    <location>
        <position position="207"/>
    </location>
    <ligand>
        <name>Cu cation</name>
        <dbReference type="ChEBI" id="CHEBI:23378"/>
        <label>A1</label>
    </ligand>
</feature>
<geneLocation type="mitochondrion"/>
<proteinExistence type="inferred from homology"/>
<sequence>MAQQAQLGLQDAASPIMEELIHFHDHTLTVVFLISVLIFYLIIVMVTTTFMNKHSLDSQEVEIVWTVMPAIVLITIALPSLRILYLTDEISNPHLTIKAVGHQWYWSYEYTDYHQMEFDSYMIPTNELEPGGIRLLDVDHRIVVPMESPVRMLITSEDVIHSWTIPSLGTKVDAVPGRLNQATFITTRPGLFFGQCSEICGANHSFMPIALEAVPLSNFENWTTKVLAS</sequence>